<sequence>MSTTDDTHNTLSTGKCPFHQGGHDRSAGAGTASRDWWPNQLRVDLLNQHSNRSNPLGEDFDYRKEFSKLDYSALKGDLKALLTDSQPWWPADWGSYVGLFIRMAWHGAGTYRSIDGRGGAGRGQQRFAPLNSWPDNVSLDKARRLLWPIKQKYGQKISWADLFILAGNVALENSGFRTFGFGAGREDVWEPDLDVNWGDEKAWLTHRHPEALAKAPLGATEMGLIYVNPEGPDHSGEPLSAAAAIRATFGNMGMNDEETVALIAGGHTLGKTHGAAAASHVGADPEAAPIEAQGLGWASSYGSGVGADAITSGLEVVWTQTPTQWSNYFFENLFKYEWVQTRSPAGAIQFEAVDAPDIIPDPFDPSKKRKPTMLVTDLTLRFDPEFEKISRRFLNDPQAFNEAFARAWFKLTHRDMGPKARYIGPEVPKEDLIWQDPLPQPLYQPTQEDIINLKAAIAASGLSISEMVSVAWASASTFRGGDKRGGANGARLALAPQRDWDVNAVAARVLPVLEEIQKTTNKASLADIIVLAGVVGIEQAAAAAGVSISVPFAPGRVDARQDQTDIEMFSLLEPIADGFRNYRARLDVSTTESLLIDKAQQLTLTAPEMTVLVGGMRVLGTNFDGSQNGVFTDRPGVLSTDFFANLLDMRYEWKPTDDANELFEGRDRLTGEVKYTATRADLVFGSNSVLRALAEVYACSDAHEKFVKDFVAAWVKVMNLDRFDLQ</sequence>
<dbReference type="EC" id="1.11.1.21" evidence="1"/>
<dbReference type="EMBL" id="X53001">
    <property type="protein sequence ID" value="CAA37187.1"/>
    <property type="molecule type" value="Genomic_DNA"/>
</dbReference>
<dbReference type="EMBL" id="AE006468">
    <property type="protein sequence ID" value="AAL22946.1"/>
    <property type="molecule type" value="Genomic_DNA"/>
</dbReference>
<dbReference type="PIR" id="S12039">
    <property type="entry name" value="CSEBHT"/>
</dbReference>
<dbReference type="RefSeq" id="NP_462987.1">
    <property type="nucleotide sequence ID" value="NC_003197.2"/>
</dbReference>
<dbReference type="RefSeq" id="WP_000108103.1">
    <property type="nucleotide sequence ID" value="NC_003197.2"/>
</dbReference>
<dbReference type="SMR" id="P17750"/>
<dbReference type="STRING" id="99287.STM4106"/>
<dbReference type="PeroxiBase" id="2443">
    <property type="entry name" value="SetypCP01_LT2"/>
</dbReference>
<dbReference type="PaxDb" id="99287-STM4106"/>
<dbReference type="GeneID" id="1255633"/>
<dbReference type="KEGG" id="stm:STM4106"/>
<dbReference type="PATRIC" id="fig|99287.12.peg.4329"/>
<dbReference type="HOGENOM" id="CLU_025424_2_0_6"/>
<dbReference type="OMA" id="GPETTWL"/>
<dbReference type="PhylomeDB" id="P17750"/>
<dbReference type="BioCyc" id="SENT99287:STM4106-MONOMER"/>
<dbReference type="PHI-base" id="PHI:11381"/>
<dbReference type="Proteomes" id="UP000001014">
    <property type="component" value="Chromosome"/>
</dbReference>
<dbReference type="GO" id="GO:0005829">
    <property type="term" value="C:cytosol"/>
    <property type="evidence" value="ECO:0000318"/>
    <property type="project" value="GO_Central"/>
</dbReference>
<dbReference type="GO" id="GO:0004096">
    <property type="term" value="F:catalase activity"/>
    <property type="evidence" value="ECO:0000318"/>
    <property type="project" value="GO_Central"/>
</dbReference>
<dbReference type="GO" id="GO:0020037">
    <property type="term" value="F:heme binding"/>
    <property type="evidence" value="ECO:0000318"/>
    <property type="project" value="GO_Central"/>
</dbReference>
<dbReference type="GO" id="GO:0046872">
    <property type="term" value="F:metal ion binding"/>
    <property type="evidence" value="ECO:0007669"/>
    <property type="project" value="UniProtKB-KW"/>
</dbReference>
<dbReference type="GO" id="GO:0070301">
    <property type="term" value="P:cellular response to hydrogen peroxide"/>
    <property type="evidence" value="ECO:0000318"/>
    <property type="project" value="GO_Central"/>
</dbReference>
<dbReference type="GO" id="GO:0042744">
    <property type="term" value="P:hydrogen peroxide catabolic process"/>
    <property type="evidence" value="ECO:0000318"/>
    <property type="project" value="GO_Central"/>
</dbReference>
<dbReference type="CDD" id="cd08200">
    <property type="entry name" value="catalase_peroxidase_2"/>
    <property type="match status" value="1"/>
</dbReference>
<dbReference type="FunFam" id="1.10.420.10:FF:000002">
    <property type="entry name" value="Catalase-peroxidase"/>
    <property type="match status" value="1"/>
</dbReference>
<dbReference type="FunFam" id="1.10.420.10:FF:000004">
    <property type="entry name" value="Catalase-peroxidase"/>
    <property type="match status" value="1"/>
</dbReference>
<dbReference type="FunFam" id="1.10.520.10:FF:000002">
    <property type="entry name" value="Catalase-peroxidase"/>
    <property type="match status" value="1"/>
</dbReference>
<dbReference type="Gene3D" id="1.10.520.10">
    <property type="match status" value="2"/>
</dbReference>
<dbReference type="Gene3D" id="1.10.420.10">
    <property type="entry name" value="Peroxidase, domain 2"/>
    <property type="match status" value="2"/>
</dbReference>
<dbReference type="HAMAP" id="MF_01961">
    <property type="entry name" value="Catal_peroxid"/>
    <property type="match status" value="1"/>
</dbReference>
<dbReference type="InterPro" id="IPR000763">
    <property type="entry name" value="Catalase_peroxidase"/>
</dbReference>
<dbReference type="InterPro" id="IPR002016">
    <property type="entry name" value="Haem_peroxidase"/>
</dbReference>
<dbReference type="InterPro" id="IPR010255">
    <property type="entry name" value="Haem_peroxidase_sf"/>
</dbReference>
<dbReference type="InterPro" id="IPR019794">
    <property type="entry name" value="Peroxidases_AS"/>
</dbReference>
<dbReference type="InterPro" id="IPR019793">
    <property type="entry name" value="Peroxidases_heam-ligand_BS"/>
</dbReference>
<dbReference type="NCBIfam" id="TIGR00198">
    <property type="entry name" value="cat_per_HPI"/>
    <property type="match status" value="1"/>
</dbReference>
<dbReference type="NCBIfam" id="NF011635">
    <property type="entry name" value="PRK15061.1"/>
    <property type="match status" value="1"/>
</dbReference>
<dbReference type="PANTHER" id="PTHR30555:SF0">
    <property type="entry name" value="CATALASE-PEROXIDASE"/>
    <property type="match status" value="1"/>
</dbReference>
<dbReference type="PANTHER" id="PTHR30555">
    <property type="entry name" value="HYDROPEROXIDASE I, BIFUNCTIONAL CATALASE-PEROXIDASE"/>
    <property type="match status" value="1"/>
</dbReference>
<dbReference type="Pfam" id="PF00141">
    <property type="entry name" value="peroxidase"/>
    <property type="match status" value="2"/>
</dbReference>
<dbReference type="PRINTS" id="PR00460">
    <property type="entry name" value="BPEROXIDASE"/>
</dbReference>
<dbReference type="PRINTS" id="PR00458">
    <property type="entry name" value="PEROXIDASE"/>
</dbReference>
<dbReference type="SUPFAM" id="SSF48113">
    <property type="entry name" value="Heme-dependent peroxidases"/>
    <property type="match status" value="2"/>
</dbReference>
<dbReference type="PROSITE" id="PS00435">
    <property type="entry name" value="PEROXIDASE_1"/>
    <property type="match status" value="1"/>
</dbReference>
<dbReference type="PROSITE" id="PS00436">
    <property type="entry name" value="PEROXIDASE_2"/>
    <property type="match status" value="1"/>
</dbReference>
<dbReference type="PROSITE" id="PS50873">
    <property type="entry name" value="PEROXIDASE_4"/>
    <property type="match status" value="1"/>
</dbReference>
<accession>P17750</accession>
<reference key="1">
    <citation type="journal article" date="1990" name="Mol. Gen. Genet.">
        <title>Nucleotide sequence of katG of Salmonella typhimurium LT2 and characterization of its product, hydroperoxidase I.</title>
        <authorList>
            <person name="Loewen P.C."/>
            <person name="Stauffer G.V."/>
        </authorList>
    </citation>
    <scope>NUCLEOTIDE SEQUENCE [GENOMIC DNA]</scope>
    <source>
        <strain>LT2</strain>
    </source>
</reference>
<reference key="2">
    <citation type="journal article" date="2001" name="Nature">
        <title>Complete genome sequence of Salmonella enterica serovar Typhimurium LT2.</title>
        <authorList>
            <person name="McClelland M."/>
            <person name="Sanderson K.E."/>
            <person name="Spieth J."/>
            <person name="Clifton S.W."/>
            <person name="Latreille P."/>
            <person name="Courtney L."/>
            <person name="Porwollik S."/>
            <person name="Ali J."/>
            <person name="Dante M."/>
            <person name="Du F."/>
            <person name="Hou S."/>
            <person name="Layman D."/>
            <person name="Leonard S."/>
            <person name="Nguyen C."/>
            <person name="Scott K."/>
            <person name="Holmes A."/>
            <person name="Grewal N."/>
            <person name="Mulvaney E."/>
            <person name="Ryan E."/>
            <person name="Sun H."/>
            <person name="Florea L."/>
            <person name="Miller W."/>
            <person name="Stoneking T."/>
            <person name="Nhan M."/>
            <person name="Waterston R."/>
            <person name="Wilson R.K."/>
        </authorList>
    </citation>
    <scope>NUCLEOTIDE SEQUENCE [LARGE SCALE GENOMIC DNA]</scope>
    <source>
        <strain>LT2 / SGSC1412 / ATCC 700720</strain>
    </source>
</reference>
<comment type="function">
    <text>Bifunctional enzyme with both catalase and broad-spectrum peroxidase activity.</text>
</comment>
<comment type="catalytic activity">
    <reaction evidence="1">
        <text>H2O2 + AH2 = A + 2 H2O</text>
        <dbReference type="Rhea" id="RHEA:30275"/>
        <dbReference type="ChEBI" id="CHEBI:13193"/>
        <dbReference type="ChEBI" id="CHEBI:15377"/>
        <dbReference type="ChEBI" id="CHEBI:16240"/>
        <dbReference type="ChEBI" id="CHEBI:17499"/>
        <dbReference type="EC" id="1.11.1.21"/>
    </reaction>
</comment>
<comment type="catalytic activity">
    <reaction evidence="1">
        <text>2 H2O2 = O2 + 2 H2O</text>
        <dbReference type="Rhea" id="RHEA:20309"/>
        <dbReference type="ChEBI" id="CHEBI:15377"/>
        <dbReference type="ChEBI" id="CHEBI:15379"/>
        <dbReference type="ChEBI" id="CHEBI:16240"/>
        <dbReference type="EC" id="1.11.1.21"/>
    </reaction>
</comment>
<comment type="cofactor">
    <cofactor>
        <name>heme b</name>
        <dbReference type="ChEBI" id="CHEBI:60344"/>
    </cofactor>
    <text>Binds 1 heme b (iron(II)-protoporphyrin IX) group per dimer.</text>
</comment>
<comment type="subunit">
    <text>Homotetramer.</text>
</comment>
<comment type="PTM">
    <text evidence="1">Formation of the three residue Trp-Tyr-Met cross-link is important for the catalase, but not the peroxidase activity of the enzyme.</text>
</comment>
<comment type="similarity">
    <text evidence="1">Belongs to the peroxidase family. Peroxidase/catalase subfamily.</text>
</comment>
<evidence type="ECO:0000255" key="1">
    <source>
        <dbReference type="HAMAP-Rule" id="MF_01961"/>
    </source>
</evidence>
<evidence type="ECO:0000256" key="2">
    <source>
        <dbReference type="SAM" id="MobiDB-lite"/>
    </source>
</evidence>
<evidence type="ECO:0000305" key="3"/>
<proteinExistence type="inferred from homology"/>
<feature type="chain" id="PRO_0000055566" description="Catalase-peroxidase">
    <location>
        <begin position="1"/>
        <end position="726"/>
    </location>
</feature>
<feature type="region of interest" description="Disordered" evidence="2">
    <location>
        <begin position="1"/>
        <end position="33"/>
    </location>
</feature>
<feature type="active site" description="Proton acceptor" evidence="1">
    <location>
        <position position="106"/>
    </location>
</feature>
<feature type="binding site" description="axial binding residue" evidence="1">
    <location>
        <position position="267"/>
    </location>
    <ligand>
        <name>heme b</name>
        <dbReference type="ChEBI" id="CHEBI:60344"/>
    </ligand>
    <ligandPart>
        <name>Fe</name>
        <dbReference type="ChEBI" id="CHEBI:18248"/>
    </ligandPart>
</feature>
<feature type="site" description="Transition state stabilizer" evidence="1">
    <location>
        <position position="102"/>
    </location>
</feature>
<feature type="cross-link" description="Tryptophyl-tyrosyl-methioninium (Trp-Tyr) (with M-252)" evidence="1">
    <location>
        <begin position="105"/>
        <end position="226"/>
    </location>
</feature>
<feature type="cross-link" description="Tryptophyl-tyrosyl-methioninium (Tyr-Met) (with W-105)" evidence="1">
    <location>
        <begin position="226"/>
        <end position="252"/>
    </location>
</feature>
<feature type="sequence conflict" description="In Ref. 1; CAA37187." evidence="3" ref="1">
    <original>Y</original>
    <variation>YY</variation>
    <location>
        <position position="71"/>
    </location>
</feature>
<feature type="sequence conflict" description="In Ref. 1; CAA37187." evidence="3" ref="1">
    <original>N</original>
    <variation>T</variation>
    <location>
        <position position="136"/>
    </location>
</feature>
<feature type="sequence conflict" description="In Ref. 1; CAA37187." evidence="3" ref="1">
    <original>G</original>
    <variation>D</variation>
    <location>
        <position position="223"/>
    </location>
</feature>
<feature type="sequence conflict" description="In Ref. 1; CAA37187." evidence="3" ref="1">
    <original>N</original>
    <variation>T</variation>
    <location>
        <position position="228"/>
    </location>
</feature>
<feature type="sequence conflict" description="In Ref. 1; CAA37187." evidence="3" ref="1">
    <original>D</original>
    <variation>N</variation>
    <location>
        <position position="233"/>
    </location>
</feature>
<feature type="sequence conflict" description="In Ref. 1; CAA37187." evidence="3" ref="1">
    <original>A</original>
    <variation>P</variation>
    <location>
        <position position="275"/>
    </location>
</feature>
<feature type="sequence conflict" description="In Ref. 1; CAA37187." evidence="3" ref="1">
    <original>G</original>
    <variation>R</variation>
    <location>
        <position position="545"/>
    </location>
</feature>
<feature type="sequence conflict" description="In Ref. 1; CAA37187." evidence="3" ref="1">
    <original>S</original>
    <variation>H</variation>
    <location>
        <position position="549"/>
    </location>
</feature>
<feature type="sequence conflict" description="In Ref. 1; CAA37187." evidence="3" ref="1">
    <original>A</original>
    <variation>P</variation>
    <location>
        <position position="553"/>
    </location>
</feature>
<feature type="sequence conflict" description="In Ref. 1; CAA37187." evidence="3" ref="1">
    <original>Q</original>
    <variation>H</variation>
    <location>
        <position position="561"/>
    </location>
</feature>
<feature type="sequence conflict" description="In Ref. 1; CAA37187." evidence="3" ref="1">
    <original>R</original>
    <variation>K</variation>
    <location>
        <position position="634"/>
    </location>
</feature>
<keyword id="KW-0349">Heme</keyword>
<keyword id="KW-0376">Hydrogen peroxide</keyword>
<keyword id="KW-0408">Iron</keyword>
<keyword id="KW-0479">Metal-binding</keyword>
<keyword id="KW-0560">Oxidoreductase</keyword>
<keyword id="KW-0575">Peroxidase</keyword>
<keyword id="KW-1185">Reference proteome</keyword>
<organism>
    <name type="scientific">Salmonella typhimurium (strain LT2 / SGSC1412 / ATCC 700720)</name>
    <dbReference type="NCBI Taxonomy" id="99287"/>
    <lineage>
        <taxon>Bacteria</taxon>
        <taxon>Pseudomonadati</taxon>
        <taxon>Pseudomonadota</taxon>
        <taxon>Gammaproteobacteria</taxon>
        <taxon>Enterobacterales</taxon>
        <taxon>Enterobacteriaceae</taxon>
        <taxon>Salmonella</taxon>
    </lineage>
</organism>
<protein>
    <recommendedName>
        <fullName evidence="1">Catalase-peroxidase</fullName>
        <shortName evidence="1">CP</shortName>
        <ecNumber evidence="1">1.11.1.21</ecNumber>
    </recommendedName>
    <alternativeName>
        <fullName>Hydroperoxidase I</fullName>
        <shortName>HPI</shortName>
    </alternativeName>
    <alternativeName>
        <fullName evidence="1">Peroxidase/catalase</fullName>
    </alternativeName>
</protein>
<gene>
    <name evidence="1" type="primary">katG</name>
    <name type="ordered locus">STM4106</name>
</gene>
<name>KATG_SALTY</name>